<evidence type="ECO:0000255" key="1">
    <source>
        <dbReference type="HAMAP-Rule" id="MF_01326"/>
    </source>
</evidence>
<evidence type="ECO:0000305" key="2"/>
<accession>Q73H97</accession>
<sequence length="105" mass="11235">MSAKIKSGDDVIVLTGKDKGKIGKVIKVIARDAKKKVIVSGVNVHKRHTKPKAGSSGGILNKELAIDISNVATLDPKYKTPTRVGFKVIDGRKVRFAKVSGEVID</sequence>
<proteinExistence type="inferred from homology"/>
<organism>
    <name type="scientific">Wolbachia pipientis wMel</name>
    <dbReference type="NCBI Taxonomy" id="163164"/>
    <lineage>
        <taxon>Bacteria</taxon>
        <taxon>Pseudomonadati</taxon>
        <taxon>Pseudomonadota</taxon>
        <taxon>Alphaproteobacteria</taxon>
        <taxon>Rickettsiales</taxon>
        <taxon>Anaplasmataceae</taxon>
        <taxon>Wolbachieae</taxon>
        <taxon>Wolbachia</taxon>
    </lineage>
</organism>
<name>RL24_WOLPM</name>
<keyword id="KW-0687">Ribonucleoprotein</keyword>
<keyword id="KW-0689">Ribosomal protein</keyword>
<keyword id="KW-0694">RNA-binding</keyword>
<keyword id="KW-0699">rRNA-binding</keyword>
<reference key="1">
    <citation type="journal article" date="2004" name="PLoS Biol.">
        <title>Phylogenomics of the reproductive parasite Wolbachia pipientis wMel: a streamlined genome overrun by mobile genetic elements.</title>
        <authorList>
            <person name="Wu M."/>
            <person name="Sun L.V."/>
            <person name="Vamathevan J.J."/>
            <person name="Riegler M."/>
            <person name="DeBoy R.T."/>
            <person name="Brownlie J.C."/>
            <person name="McGraw E.A."/>
            <person name="Martin W."/>
            <person name="Esser C."/>
            <person name="Ahmadinejad N."/>
            <person name="Wiegand C."/>
            <person name="Madupu R."/>
            <person name="Beanan M.J."/>
            <person name="Brinkac L.M."/>
            <person name="Daugherty S.C."/>
            <person name="Durkin A.S."/>
            <person name="Kolonay J.F."/>
            <person name="Nelson W.C."/>
            <person name="Mohamoud Y."/>
            <person name="Lee P."/>
            <person name="Berry K.J."/>
            <person name="Young M.B."/>
            <person name="Utterback T.R."/>
            <person name="Weidman J.F."/>
            <person name="Nierman W.C."/>
            <person name="Paulsen I.T."/>
            <person name="Nelson K.E."/>
            <person name="Tettelin H."/>
            <person name="O'Neill S.L."/>
            <person name="Eisen J.A."/>
        </authorList>
    </citation>
    <scope>NUCLEOTIDE SEQUENCE [LARGE SCALE GENOMIC DNA]</scope>
</reference>
<feature type="chain" id="PRO_0000241685" description="Large ribosomal subunit protein uL24">
    <location>
        <begin position="1"/>
        <end position="105"/>
    </location>
</feature>
<dbReference type="EMBL" id="AE017196">
    <property type="protein sequence ID" value="AAS14368.1"/>
    <property type="molecule type" value="Genomic_DNA"/>
</dbReference>
<dbReference type="RefSeq" id="WP_006279347.1">
    <property type="nucleotide sequence ID" value="NZ_JAGKTG010000027.1"/>
</dbReference>
<dbReference type="SMR" id="Q73H97"/>
<dbReference type="EnsemblBacteria" id="AAS14368">
    <property type="protein sequence ID" value="AAS14368"/>
    <property type="gene ID" value="WD_0670"/>
</dbReference>
<dbReference type="GeneID" id="70036153"/>
<dbReference type="KEGG" id="wol:WD_0670"/>
<dbReference type="eggNOG" id="COG0198">
    <property type="taxonomic scope" value="Bacteria"/>
</dbReference>
<dbReference type="Proteomes" id="UP000008215">
    <property type="component" value="Chromosome"/>
</dbReference>
<dbReference type="GO" id="GO:1990904">
    <property type="term" value="C:ribonucleoprotein complex"/>
    <property type="evidence" value="ECO:0007669"/>
    <property type="project" value="UniProtKB-KW"/>
</dbReference>
<dbReference type="GO" id="GO:0005840">
    <property type="term" value="C:ribosome"/>
    <property type="evidence" value="ECO:0007669"/>
    <property type="project" value="UniProtKB-KW"/>
</dbReference>
<dbReference type="GO" id="GO:0019843">
    <property type="term" value="F:rRNA binding"/>
    <property type="evidence" value="ECO:0007669"/>
    <property type="project" value="UniProtKB-UniRule"/>
</dbReference>
<dbReference type="GO" id="GO:0003735">
    <property type="term" value="F:structural constituent of ribosome"/>
    <property type="evidence" value="ECO:0007669"/>
    <property type="project" value="InterPro"/>
</dbReference>
<dbReference type="GO" id="GO:0006412">
    <property type="term" value="P:translation"/>
    <property type="evidence" value="ECO:0007669"/>
    <property type="project" value="UniProtKB-UniRule"/>
</dbReference>
<dbReference type="CDD" id="cd06089">
    <property type="entry name" value="KOW_RPL26"/>
    <property type="match status" value="1"/>
</dbReference>
<dbReference type="Gene3D" id="2.30.30.30">
    <property type="match status" value="1"/>
</dbReference>
<dbReference type="HAMAP" id="MF_01326_B">
    <property type="entry name" value="Ribosomal_uL24_B"/>
    <property type="match status" value="1"/>
</dbReference>
<dbReference type="InterPro" id="IPR005824">
    <property type="entry name" value="KOW"/>
</dbReference>
<dbReference type="InterPro" id="IPR014722">
    <property type="entry name" value="Rib_uL2_dom2"/>
</dbReference>
<dbReference type="InterPro" id="IPR003256">
    <property type="entry name" value="Ribosomal_uL24"/>
</dbReference>
<dbReference type="InterPro" id="IPR005825">
    <property type="entry name" value="Ribosomal_uL24_CS"/>
</dbReference>
<dbReference type="InterPro" id="IPR041988">
    <property type="entry name" value="Ribosomal_uL24_KOW"/>
</dbReference>
<dbReference type="InterPro" id="IPR008991">
    <property type="entry name" value="Translation_prot_SH3-like_sf"/>
</dbReference>
<dbReference type="NCBIfam" id="TIGR01079">
    <property type="entry name" value="rplX_bact"/>
    <property type="match status" value="1"/>
</dbReference>
<dbReference type="PANTHER" id="PTHR12903">
    <property type="entry name" value="MITOCHONDRIAL RIBOSOMAL PROTEIN L24"/>
    <property type="match status" value="1"/>
</dbReference>
<dbReference type="Pfam" id="PF17136">
    <property type="entry name" value="ribosomal_L24"/>
    <property type="match status" value="1"/>
</dbReference>
<dbReference type="SMART" id="SM00739">
    <property type="entry name" value="KOW"/>
    <property type="match status" value="1"/>
</dbReference>
<dbReference type="SUPFAM" id="SSF50104">
    <property type="entry name" value="Translation proteins SH3-like domain"/>
    <property type="match status" value="1"/>
</dbReference>
<dbReference type="PROSITE" id="PS01108">
    <property type="entry name" value="RIBOSOMAL_L24"/>
    <property type="match status" value="1"/>
</dbReference>
<comment type="function">
    <text evidence="1">One of two assembly initiator proteins, it binds directly to the 5'-end of the 23S rRNA, where it nucleates assembly of the 50S subunit.</text>
</comment>
<comment type="function">
    <text evidence="1">One of the proteins that surrounds the polypeptide exit tunnel on the outside of the subunit.</text>
</comment>
<comment type="subunit">
    <text evidence="1">Part of the 50S ribosomal subunit.</text>
</comment>
<comment type="similarity">
    <text evidence="1">Belongs to the universal ribosomal protein uL24 family.</text>
</comment>
<gene>
    <name evidence="1" type="primary">rplX</name>
    <name type="ordered locus">WD_0670</name>
</gene>
<protein>
    <recommendedName>
        <fullName evidence="1">Large ribosomal subunit protein uL24</fullName>
    </recommendedName>
    <alternativeName>
        <fullName evidence="2">50S ribosomal protein L24</fullName>
    </alternativeName>
</protein>